<name>ATPL_YERPP</name>
<dbReference type="EMBL" id="CP000668">
    <property type="protein sequence ID" value="ABP42250.1"/>
    <property type="molecule type" value="Genomic_DNA"/>
</dbReference>
<dbReference type="RefSeq" id="WP_000429386.1">
    <property type="nucleotide sequence ID" value="NZ_CP009715.1"/>
</dbReference>
<dbReference type="BMRB" id="A4TSI8"/>
<dbReference type="SMR" id="A4TSI8"/>
<dbReference type="GeneID" id="98390858"/>
<dbReference type="KEGG" id="ypp:YPDSF_3909"/>
<dbReference type="PATRIC" id="fig|386656.14.peg.608"/>
<dbReference type="GO" id="GO:0005886">
    <property type="term" value="C:plasma membrane"/>
    <property type="evidence" value="ECO:0007669"/>
    <property type="project" value="UniProtKB-SubCell"/>
</dbReference>
<dbReference type="GO" id="GO:0045259">
    <property type="term" value="C:proton-transporting ATP synthase complex"/>
    <property type="evidence" value="ECO:0007669"/>
    <property type="project" value="UniProtKB-KW"/>
</dbReference>
<dbReference type="GO" id="GO:0033177">
    <property type="term" value="C:proton-transporting two-sector ATPase complex, proton-transporting domain"/>
    <property type="evidence" value="ECO:0007669"/>
    <property type="project" value="InterPro"/>
</dbReference>
<dbReference type="GO" id="GO:0008289">
    <property type="term" value="F:lipid binding"/>
    <property type="evidence" value="ECO:0007669"/>
    <property type="project" value="UniProtKB-KW"/>
</dbReference>
<dbReference type="GO" id="GO:0046933">
    <property type="term" value="F:proton-transporting ATP synthase activity, rotational mechanism"/>
    <property type="evidence" value="ECO:0007669"/>
    <property type="project" value="UniProtKB-UniRule"/>
</dbReference>
<dbReference type="CDD" id="cd18185">
    <property type="entry name" value="ATP-synt_Fo_c_ATPE"/>
    <property type="match status" value="1"/>
</dbReference>
<dbReference type="FunFam" id="1.20.20.10:FF:000002">
    <property type="entry name" value="ATP synthase subunit c"/>
    <property type="match status" value="1"/>
</dbReference>
<dbReference type="Gene3D" id="1.20.20.10">
    <property type="entry name" value="F1F0 ATP synthase subunit C"/>
    <property type="match status" value="1"/>
</dbReference>
<dbReference type="HAMAP" id="MF_01396">
    <property type="entry name" value="ATP_synth_c_bact"/>
    <property type="match status" value="1"/>
</dbReference>
<dbReference type="InterPro" id="IPR005953">
    <property type="entry name" value="ATP_synth_csu_bac/chlpt"/>
</dbReference>
<dbReference type="InterPro" id="IPR000454">
    <property type="entry name" value="ATP_synth_F0_csu"/>
</dbReference>
<dbReference type="InterPro" id="IPR020537">
    <property type="entry name" value="ATP_synth_F0_csu_DDCD_BS"/>
</dbReference>
<dbReference type="InterPro" id="IPR038662">
    <property type="entry name" value="ATP_synth_F0_csu_sf"/>
</dbReference>
<dbReference type="InterPro" id="IPR002379">
    <property type="entry name" value="ATPase_proteolipid_c-like_dom"/>
</dbReference>
<dbReference type="InterPro" id="IPR035921">
    <property type="entry name" value="F/V-ATP_Csub_sf"/>
</dbReference>
<dbReference type="NCBIfam" id="TIGR01260">
    <property type="entry name" value="ATP_synt_c"/>
    <property type="match status" value="1"/>
</dbReference>
<dbReference type="NCBIfam" id="NF005363">
    <property type="entry name" value="PRK06876.1"/>
    <property type="match status" value="1"/>
</dbReference>
<dbReference type="Pfam" id="PF00137">
    <property type="entry name" value="ATP-synt_C"/>
    <property type="match status" value="1"/>
</dbReference>
<dbReference type="PRINTS" id="PR00124">
    <property type="entry name" value="ATPASEC"/>
</dbReference>
<dbReference type="SUPFAM" id="SSF81333">
    <property type="entry name" value="F1F0 ATP synthase subunit C"/>
    <property type="match status" value="1"/>
</dbReference>
<dbReference type="PROSITE" id="PS00605">
    <property type="entry name" value="ATPASE_C"/>
    <property type="match status" value="1"/>
</dbReference>
<keyword id="KW-0066">ATP synthesis</keyword>
<keyword id="KW-0997">Cell inner membrane</keyword>
<keyword id="KW-1003">Cell membrane</keyword>
<keyword id="KW-0138">CF(0)</keyword>
<keyword id="KW-0375">Hydrogen ion transport</keyword>
<keyword id="KW-0406">Ion transport</keyword>
<keyword id="KW-0446">Lipid-binding</keyword>
<keyword id="KW-0472">Membrane</keyword>
<keyword id="KW-0812">Transmembrane</keyword>
<keyword id="KW-1133">Transmembrane helix</keyword>
<keyword id="KW-0813">Transport</keyword>
<organism>
    <name type="scientific">Yersinia pestis (strain Pestoides F)</name>
    <dbReference type="NCBI Taxonomy" id="386656"/>
    <lineage>
        <taxon>Bacteria</taxon>
        <taxon>Pseudomonadati</taxon>
        <taxon>Pseudomonadota</taxon>
        <taxon>Gammaproteobacteria</taxon>
        <taxon>Enterobacterales</taxon>
        <taxon>Yersiniaceae</taxon>
        <taxon>Yersinia</taxon>
    </lineage>
</organism>
<comment type="function">
    <text evidence="1">F(1)F(0) ATP synthase produces ATP from ADP in the presence of a proton or sodium gradient. F-type ATPases consist of two structural domains, F(1) containing the extramembraneous catalytic core and F(0) containing the membrane proton channel, linked together by a central stalk and a peripheral stalk. During catalysis, ATP synthesis in the catalytic domain of F(1) is coupled via a rotary mechanism of the central stalk subunits to proton translocation.</text>
</comment>
<comment type="function">
    <text evidence="1">Key component of the F(0) channel; it plays a direct role in translocation across the membrane. A homomeric c-ring of between 10-14 subunits forms the central stalk rotor element with the F(1) delta and epsilon subunits.</text>
</comment>
<comment type="subunit">
    <text evidence="1">F-type ATPases have 2 components, F(1) - the catalytic core - and F(0) - the membrane proton channel. F(1) has five subunits: alpha(3), beta(3), gamma(1), delta(1), epsilon(1). F(0) has three main subunits: a(1), b(2) and c(10-14). The alpha and beta chains form an alternating ring which encloses part of the gamma chain. F(1) is attached to F(0) by a central stalk formed by the gamma and epsilon chains, while a peripheral stalk is formed by the delta and b chains.</text>
</comment>
<comment type="subcellular location">
    <subcellularLocation>
        <location evidence="1">Cell inner membrane</location>
        <topology evidence="1">Multi-pass membrane protein</topology>
    </subcellularLocation>
</comment>
<comment type="similarity">
    <text evidence="1">Belongs to the ATPase C chain family.</text>
</comment>
<evidence type="ECO:0000255" key="1">
    <source>
        <dbReference type="HAMAP-Rule" id="MF_01396"/>
    </source>
</evidence>
<feature type="chain" id="PRO_1000184544" description="ATP synthase subunit c">
    <location>
        <begin position="1"/>
        <end position="79"/>
    </location>
</feature>
<feature type="transmembrane region" description="Helical" evidence="1">
    <location>
        <begin position="11"/>
        <end position="31"/>
    </location>
</feature>
<feature type="transmembrane region" description="Helical" evidence="1">
    <location>
        <begin position="53"/>
        <end position="73"/>
    </location>
</feature>
<feature type="site" description="Reversibly protonated during proton transport" evidence="1">
    <location>
        <position position="61"/>
    </location>
</feature>
<reference key="1">
    <citation type="submission" date="2007-02" db="EMBL/GenBank/DDBJ databases">
        <title>Complete sequence of chromosome of Yersinia pestis Pestoides F.</title>
        <authorList>
            <consortium name="US DOE Joint Genome Institute"/>
            <person name="Copeland A."/>
            <person name="Lucas S."/>
            <person name="Lapidus A."/>
            <person name="Barry K."/>
            <person name="Detter J.C."/>
            <person name="Glavina del Rio T."/>
            <person name="Hammon N."/>
            <person name="Israni S."/>
            <person name="Dalin E."/>
            <person name="Tice H."/>
            <person name="Pitluck S."/>
            <person name="Di Bartolo G."/>
            <person name="Chain P."/>
            <person name="Malfatti S."/>
            <person name="Shin M."/>
            <person name="Vergez L."/>
            <person name="Schmutz J."/>
            <person name="Larimer F."/>
            <person name="Land M."/>
            <person name="Hauser L."/>
            <person name="Worsham P."/>
            <person name="Chu M."/>
            <person name="Bearden S."/>
            <person name="Garcia E."/>
            <person name="Richardson P."/>
        </authorList>
    </citation>
    <scope>NUCLEOTIDE SEQUENCE [LARGE SCALE GENOMIC DNA]</scope>
    <source>
        <strain>Pestoides F</strain>
    </source>
</reference>
<sequence>MENLNMDLLYMAAAVMMGLAAIGAAIGIGILGGKFLEGAARQPDLIPLLRTQFFIVMGLVDAIPMIAVGLGLYVMFAVA</sequence>
<accession>A4TSI8</accession>
<gene>
    <name evidence="1" type="primary">atpE</name>
    <name type="ordered locus">YPDSF_3909</name>
</gene>
<proteinExistence type="inferred from homology"/>
<protein>
    <recommendedName>
        <fullName evidence="1">ATP synthase subunit c</fullName>
    </recommendedName>
    <alternativeName>
        <fullName evidence="1">ATP synthase F(0) sector subunit c</fullName>
    </alternativeName>
    <alternativeName>
        <fullName evidence="1">F-type ATPase subunit c</fullName>
        <shortName evidence="1">F-ATPase subunit c</shortName>
    </alternativeName>
    <alternativeName>
        <fullName evidence="1">Lipid-binding protein</fullName>
    </alternativeName>
</protein>